<proteinExistence type="inferred from homology"/>
<accession>P0AD26</accession>
<accession>P33921</accession>
<comment type="similarity">
    <text evidence="1">Belongs to the UPF0352 family.</text>
</comment>
<keyword id="KW-1185">Reference proteome</keyword>
<feature type="chain" id="PRO_0000201786" description="UPF0352 protein YejL">
    <location>
        <begin position="1"/>
        <end position="75"/>
    </location>
</feature>
<protein>
    <recommendedName>
        <fullName evidence="1">UPF0352 protein YejL</fullName>
    </recommendedName>
</protein>
<sequence length="75" mass="8288">MPQISRYSDEQVEQLLAELLNVLEKHKAPTDLSLMVLGNMVTNLINTSIAPAQRQAIANSFARALQSSINEDKAH</sequence>
<name>YEJL_ECO57</name>
<reference key="1">
    <citation type="journal article" date="2001" name="Nature">
        <title>Genome sequence of enterohaemorrhagic Escherichia coli O157:H7.</title>
        <authorList>
            <person name="Perna N.T."/>
            <person name="Plunkett G. III"/>
            <person name="Burland V."/>
            <person name="Mau B."/>
            <person name="Glasner J.D."/>
            <person name="Rose D.J."/>
            <person name="Mayhew G.F."/>
            <person name="Evans P.S."/>
            <person name="Gregor J."/>
            <person name="Kirkpatrick H.A."/>
            <person name="Posfai G."/>
            <person name="Hackett J."/>
            <person name="Klink S."/>
            <person name="Boutin A."/>
            <person name="Shao Y."/>
            <person name="Miller L."/>
            <person name="Grotbeck E.J."/>
            <person name="Davis N.W."/>
            <person name="Lim A."/>
            <person name="Dimalanta E.T."/>
            <person name="Potamousis K."/>
            <person name="Apodaca J."/>
            <person name="Anantharaman T.S."/>
            <person name="Lin J."/>
            <person name="Yen G."/>
            <person name="Schwartz D.C."/>
            <person name="Welch R.A."/>
            <person name="Blattner F.R."/>
        </authorList>
    </citation>
    <scope>NUCLEOTIDE SEQUENCE [LARGE SCALE GENOMIC DNA]</scope>
    <source>
        <strain>O157:H7 / EDL933 / ATCC 700927 / EHEC</strain>
    </source>
</reference>
<reference key="2">
    <citation type="journal article" date="2001" name="DNA Res.">
        <title>Complete genome sequence of enterohemorrhagic Escherichia coli O157:H7 and genomic comparison with a laboratory strain K-12.</title>
        <authorList>
            <person name="Hayashi T."/>
            <person name="Makino K."/>
            <person name="Ohnishi M."/>
            <person name="Kurokawa K."/>
            <person name="Ishii K."/>
            <person name="Yokoyama K."/>
            <person name="Han C.-G."/>
            <person name="Ohtsubo E."/>
            <person name="Nakayama K."/>
            <person name="Murata T."/>
            <person name="Tanaka M."/>
            <person name="Tobe T."/>
            <person name="Iida T."/>
            <person name="Takami H."/>
            <person name="Honda T."/>
            <person name="Sasakawa C."/>
            <person name="Ogasawara N."/>
            <person name="Yasunaga T."/>
            <person name="Kuhara S."/>
            <person name="Shiba T."/>
            <person name="Hattori M."/>
            <person name="Shinagawa H."/>
        </authorList>
    </citation>
    <scope>NUCLEOTIDE SEQUENCE [LARGE SCALE GENOMIC DNA]</scope>
    <source>
        <strain>O157:H7 / Sakai / RIMD 0509952 / EHEC</strain>
    </source>
</reference>
<gene>
    <name evidence="1" type="primary">yejL</name>
    <name type="ordered locus">Z3446</name>
    <name type="ordered locus">ECs3079</name>
</gene>
<evidence type="ECO:0000255" key="1">
    <source>
        <dbReference type="HAMAP-Rule" id="MF_00816"/>
    </source>
</evidence>
<organism>
    <name type="scientific">Escherichia coli O157:H7</name>
    <dbReference type="NCBI Taxonomy" id="83334"/>
    <lineage>
        <taxon>Bacteria</taxon>
        <taxon>Pseudomonadati</taxon>
        <taxon>Pseudomonadota</taxon>
        <taxon>Gammaproteobacteria</taxon>
        <taxon>Enterobacterales</taxon>
        <taxon>Enterobacteriaceae</taxon>
        <taxon>Escherichia</taxon>
    </lineage>
</organism>
<dbReference type="EMBL" id="AE005174">
    <property type="protein sequence ID" value="AAG57325.1"/>
    <property type="molecule type" value="Genomic_DNA"/>
</dbReference>
<dbReference type="EMBL" id="BA000007">
    <property type="protein sequence ID" value="BAB36502.1"/>
    <property type="molecule type" value="Genomic_DNA"/>
</dbReference>
<dbReference type="PIR" id="A85858">
    <property type="entry name" value="A85858"/>
</dbReference>
<dbReference type="PIR" id="G91013">
    <property type="entry name" value="G91013"/>
</dbReference>
<dbReference type="RefSeq" id="NP_311106.1">
    <property type="nucleotide sequence ID" value="NC_002695.1"/>
</dbReference>
<dbReference type="RefSeq" id="WP_001135667.1">
    <property type="nucleotide sequence ID" value="NZ_VOAI01000001.1"/>
</dbReference>
<dbReference type="SMR" id="P0AD26"/>
<dbReference type="STRING" id="155864.Z3446"/>
<dbReference type="GeneID" id="916784"/>
<dbReference type="KEGG" id="ece:Z3446"/>
<dbReference type="KEGG" id="ecs:ECs_3079"/>
<dbReference type="PATRIC" id="fig|386585.9.peg.3212"/>
<dbReference type="eggNOG" id="COG3082">
    <property type="taxonomic scope" value="Bacteria"/>
</dbReference>
<dbReference type="HOGENOM" id="CLU_175457_0_0_6"/>
<dbReference type="OMA" id="HQAPTDL"/>
<dbReference type="Proteomes" id="UP000000558">
    <property type="component" value="Chromosome"/>
</dbReference>
<dbReference type="Proteomes" id="UP000002519">
    <property type="component" value="Chromosome"/>
</dbReference>
<dbReference type="FunFam" id="1.10.3390.10:FF:000001">
    <property type="entry name" value="UPF0352 protein YejL"/>
    <property type="match status" value="1"/>
</dbReference>
<dbReference type="Gene3D" id="1.10.3390.10">
    <property type="entry name" value="YejL-like"/>
    <property type="match status" value="1"/>
</dbReference>
<dbReference type="HAMAP" id="MF_00816">
    <property type="entry name" value="UPF0352"/>
    <property type="match status" value="1"/>
</dbReference>
<dbReference type="InterPro" id="IPR009857">
    <property type="entry name" value="UPF0352"/>
</dbReference>
<dbReference type="InterPro" id="IPR023202">
    <property type="entry name" value="YejL_sf"/>
</dbReference>
<dbReference type="NCBIfam" id="NF010242">
    <property type="entry name" value="PRK13689.1"/>
    <property type="match status" value="1"/>
</dbReference>
<dbReference type="Pfam" id="PF07208">
    <property type="entry name" value="DUF1414"/>
    <property type="match status" value="1"/>
</dbReference>
<dbReference type="PIRSF" id="PIRSF006188">
    <property type="entry name" value="UCP006188"/>
    <property type="match status" value="1"/>
</dbReference>
<dbReference type="SUPFAM" id="SSF158651">
    <property type="entry name" value="YejL-like"/>
    <property type="match status" value="1"/>
</dbReference>